<organism>
    <name type="scientific">Borrelia hermsii (strain HS1 / DAH)</name>
    <dbReference type="NCBI Taxonomy" id="314723"/>
    <lineage>
        <taxon>Bacteria</taxon>
        <taxon>Pseudomonadati</taxon>
        <taxon>Spirochaetota</taxon>
        <taxon>Spirochaetia</taxon>
        <taxon>Spirochaetales</taxon>
        <taxon>Borreliaceae</taxon>
        <taxon>Borrelia</taxon>
    </lineage>
</organism>
<sequence>MINYFELSLKNLGVSFTSESIDKLKFYIKRVLLFGSRFNLVSKNDLRFDAVLLHALDSVVGFPIIKDNNPHQVLDVGSGAGFPGIILAIFDNSRKYVLLERSNKKVTFLRMMSLELGLDNVKVLERDVADEKDKYEFITIRAFRDIREYASILRLILKNGGLIMAYKGRFDKIKFEISHIESLFSKIEIKESAISDAKERNFLLLYK</sequence>
<dbReference type="EC" id="2.1.1.-" evidence="1"/>
<dbReference type="EMBL" id="CP000048">
    <property type="protein sequence ID" value="AAX16694.1"/>
    <property type="molecule type" value="Genomic_DNA"/>
</dbReference>
<dbReference type="RefSeq" id="WP_012421951.1">
    <property type="nucleotide sequence ID" value="NZ_CP073136.1"/>
</dbReference>
<dbReference type="SMR" id="B2RZN8"/>
<dbReference type="KEGG" id="bhr:BH0177"/>
<dbReference type="HOGENOM" id="CLU_065341_2_0_12"/>
<dbReference type="Proteomes" id="UP000008834">
    <property type="component" value="Chromosome"/>
</dbReference>
<dbReference type="GO" id="GO:0005829">
    <property type="term" value="C:cytosol"/>
    <property type="evidence" value="ECO:0007669"/>
    <property type="project" value="TreeGrafter"/>
</dbReference>
<dbReference type="GO" id="GO:0070043">
    <property type="term" value="F:rRNA (guanine-N7-)-methyltransferase activity"/>
    <property type="evidence" value="ECO:0007669"/>
    <property type="project" value="UniProtKB-UniRule"/>
</dbReference>
<dbReference type="CDD" id="cd02440">
    <property type="entry name" value="AdoMet_MTases"/>
    <property type="match status" value="1"/>
</dbReference>
<dbReference type="Gene3D" id="3.40.50.150">
    <property type="entry name" value="Vaccinia Virus protein VP39"/>
    <property type="match status" value="1"/>
</dbReference>
<dbReference type="HAMAP" id="MF_00074">
    <property type="entry name" value="16SrRNA_methyltr_G"/>
    <property type="match status" value="1"/>
</dbReference>
<dbReference type="InterPro" id="IPR003682">
    <property type="entry name" value="rRNA_ssu_MeTfrase_G"/>
</dbReference>
<dbReference type="InterPro" id="IPR029063">
    <property type="entry name" value="SAM-dependent_MTases_sf"/>
</dbReference>
<dbReference type="NCBIfam" id="TIGR00138">
    <property type="entry name" value="rsmG_gidB"/>
    <property type="match status" value="1"/>
</dbReference>
<dbReference type="PANTHER" id="PTHR31760">
    <property type="entry name" value="S-ADENOSYL-L-METHIONINE-DEPENDENT METHYLTRANSFERASES SUPERFAMILY PROTEIN"/>
    <property type="match status" value="1"/>
</dbReference>
<dbReference type="PANTHER" id="PTHR31760:SF0">
    <property type="entry name" value="S-ADENOSYL-L-METHIONINE-DEPENDENT METHYLTRANSFERASES SUPERFAMILY PROTEIN"/>
    <property type="match status" value="1"/>
</dbReference>
<dbReference type="Pfam" id="PF02527">
    <property type="entry name" value="GidB"/>
    <property type="match status" value="1"/>
</dbReference>
<dbReference type="PIRSF" id="PIRSF003078">
    <property type="entry name" value="GidB"/>
    <property type="match status" value="1"/>
</dbReference>
<dbReference type="SUPFAM" id="SSF53335">
    <property type="entry name" value="S-adenosyl-L-methionine-dependent methyltransferases"/>
    <property type="match status" value="1"/>
</dbReference>
<gene>
    <name evidence="1" type="primary">rsmG</name>
    <name type="ordered locus">BH0177</name>
</gene>
<reference key="1">
    <citation type="submission" date="2004-12" db="EMBL/GenBank/DDBJ databases">
        <title>The genome sequence of Borrelia hermsii and Borrelia turicatae: comparative analysis of two agents of endemic N. America relapsing fever.</title>
        <authorList>
            <person name="Porcella S.F."/>
            <person name="Raffel S.J."/>
            <person name="Schrumpf M.E."/>
            <person name="Montgomery B."/>
            <person name="Smith T."/>
            <person name="Schwan T.G."/>
        </authorList>
    </citation>
    <scope>NUCLEOTIDE SEQUENCE [LARGE SCALE GENOMIC DNA]</scope>
    <source>
        <strain>HS1 / DAH</strain>
    </source>
</reference>
<evidence type="ECO:0000255" key="1">
    <source>
        <dbReference type="HAMAP-Rule" id="MF_00074"/>
    </source>
</evidence>
<comment type="function">
    <text evidence="1">Specifically methylates the N7 position of a guanine in 16S rRNA.</text>
</comment>
<comment type="subcellular location">
    <subcellularLocation>
        <location evidence="1">Cytoplasm</location>
    </subcellularLocation>
</comment>
<comment type="similarity">
    <text evidence="1">Belongs to the methyltransferase superfamily. RNA methyltransferase RsmG family.</text>
</comment>
<proteinExistence type="inferred from homology"/>
<keyword id="KW-0963">Cytoplasm</keyword>
<keyword id="KW-0489">Methyltransferase</keyword>
<keyword id="KW-0698">rRNA processing</keyword>
<keyword id="KW-0949">S-adenosyl-L-methionine</keyword>
<keyword id="KW-0808">Transferase</keyword>
<accession>B2RZN8</accession>
<protein>
    <recommendedName>
        <fullName evidence="1">Ribosomal RNA small subunit methyltransferase G</fullName>
        <ecNumber evidence="1">2.1.1.-</ecNumber>
    </recommendedName>
    <alternativeName>
        <fullName evidence="1">16S rRNA 7-methylguanosine methyltransferase</fullName>
        <shortName evidence="1">16S rRNA m7G methyltransferase</shortName>
    </alternativeName>
</protein>
<feature type="chain" id="PRO_1000092613" description="Ribosomal RNA small subunit methyltransferase G">
    <location>
        <begin position="1"/>
        <end position="207"/>
    </location>
</feature>
<feature type="binding site" evidence="1">
    <location>
        <position position="77"/>
    </location>
    <ligand>
        <name>S-adenosyl-L-methionine</name>
        <dbReference type="ChEBI" id="CHEBI:59789"/>
    </ligand>
</feature>
<feature type="binding site" evidence="1">
    <location>
        <position position="82"/>
    </location>
    <ligand>
        <name>S-adenosyl-L-methionine</name>
        <dbReference type="ChEBI" id="CHEBI:59789"/>
    </ligand>
</feature>
<feature type="binding site" evidence="1">
    <location>
        <begin position="100"/>
        <end position="102"/>
    </location>
    <ligand>
        <name>S-adenosyl-L-methionine</name>
        <dbReference type="ChEBI" id="CHEBI:59789"/>
    </ligand>
</feature>
<feature type="binding site" evidence="1">
    <location>
        <position position="141"/>
    </location>
    <ligand>
        <name>S-adenosyl-L-methionine</name>
        <dbReference type="ChEBI" id="CHEBI:59789"/>
    </ligand>
</feature>
<name>RSMG_BORHD</name>